<accession>Q9Z3R0</accession>
<protein>
    <recommendedName>
        <fullName>Rhizobactin siderophore biosynthesis protein RhbC</fullName>
    </recommendedName>
</protein>
<name>RHBC_RHIME</name>
<sequence>MHAHNAATLTLRSLLNCVAREFPDHVRWLETQGHLRFMLTFPEGGGSLGLPAHYRSATGHHLFGEPVMLTDENGAKTVDAVEAISAVIERLEPSIAAKDGRVDLLNRTHSSRLLIEAALHARNGDLAALAGDEVSFVAAEQGLIAGHGIHPCPKSREGMTEAESRRYSPEFAAGFPLRWFAVESELFHTGHSQGSPSAEEWLKEAMGSDIDALKAPLPAGDFSLLPVHPWQADQMLKDPTVAALVAAGRMIDCGEAGKPWFPTSSVRTLYRPDASFMLKMSLGVGITNSVRVNLARELLRGDDMYRFRRHELWQDFSRSYPGLTLIPDPAFMGVKIDGALIDGLSVSMRENPFTGANADRNVSLLAAVCEHLPDRGSRLGALIRNRAHLERRPLDIVARDWFERFLTIFVRPIFGLYLRHGIAMEAHQQNIVVEIEHGYPIGLFYRDNQGFFHHERAHGALVEALPGFGEPSESVFGEEPVDERLLYYAFINSVLGMVGALGREGLVSETALLAMLRRELLRLEALEGANSGIVRKMLAPTLQCKANLKTRLARMDELVGPLETQSVYLQITNPLFETEKVLAHA</sequence>
<comment type="pathway">
    <text>Siderophore biosynthesis; rhizobactin biosynthesis.</text>
</comment>
<comment type="similarity">
    <text evidence="1">Belongs to the IucA/IucC family.</text>
</comment>
<dbReference type="EMBL" id="AF110737">
    <property type="protein sequence ID" value="AAD09414.1"/>
    <property type="molecule type" value="Genomic_DNA"/>
</dbReference>
<dbReference type="EMBL" id="AE006469">
    <property type="protein sequence ID" value="AAK65918.1"/>
    <property type="molecule type" value="Genomic_DNA"/>
</dbReference>
<dbReference type="PIR" id="D95419">
    <property type="entry name" value="D95419"/>
</dbReference>
<dbReference type="PIR" id="T46816">
    <property type="entry name" value="T46816"/>
</dbReference>
<dbReference type="RefSeq" id="NP_436506.1">
    <property type="nucleotide sequence ID" value="NC_003037.1"/>
</dbReference>
<dbReference type="RefSeq" id="WP_010968203.1">
    <property type="nucleotide sequence ID" value="NC_003037.1"/>
</dbReference>
<dbReference type="SMR" id="Q9Z3R0"/>
<dbReference type="EnsemblBacteria" id="AAK65918">
    <property type="protein sequence ID" value="AAK65918"/>
    <property type="gene ID" value="SMa2404"/>
</dbReference>
<dbReference type="KEGG" id="sme:SMa2404"/>
<dbReference type="PATRIC" id="fig|266834.11.peg.1313"/>
<dbReference type="HOGENOM" id="CLU_018283_0_0_5"/>
<dbReference type="OrthoDB" id="495728at2"/>
<dbReference type="BioCyc" id="MetaCyc:MONOMER-15542"/>
<dbReference type="UniPathway" id="UPA00020"/>
<dbReference type="Proteomes" id="UP000001976">
    <property type="component" value="Plasmid pSymA"/>
</dbReference>
<dbReference type="GO" id="GO:0016881">
    <property type="term" value="F:acid-amino acid ligase activity"/>
    <property type="evidence" value="ECO:0007669"/>
    <property type="project" value="UniProtKB-ARBA"/>
</dbReference>
<dbReference type="GO" id="GO:0019289">
    <property type="term" value="P:rhizobactin 1021 biosynthetic process"/>
    <property type="evidence" value="ECO:0007669"/>
    <property type="project" value="UniProtKB-UniPathway"/>
</dbReference>
<dbReference type="GO" id="GO:0019290">
    <property type="term" value="P:siderophore biosynthetic process"/>
    <property type="evidence" value="ECO:0007669"/>
    <property type="project" value="InterPro"/>
</dbReference>
<dbReference type="Gene3D" id="1.10.510.40">
    <property type="match status" value="1"/>
</dbReference>
<dbReference type="Gene3D" id="6.10.250.3370">
    <property type="match status" value="1"/>
</dbReference>
<dbReference type="InterPro" id="IPR007310">
    <property type="entry name" value="Aerobactin_biosyn_IucA/IucC_N"/>
</dbReference>
<dbReference type="InterPro" id="IPR022770">
    <property type="entry name" value="IucA/IucC-like_C"/>
</dbReference>
<dbReference type="InterPro" id="IPR037455">
    <property type="entry name" value="LucA/IucC-like"/>
</dbReference>
<dbReference type="PANTHER" id="PTHR34384">
    <property type="entry name" value="L-2,3-DIAMINOPROPANOATE--CITRATE LIGASE"/>
    <property type="match status" value="1"/>
</dbReference>
<dbReference type="PANTHER" id="PTHR34384:SF5">
    <property type="entry name" value="L-2,3-DIAMINOPROPANOATE--CITRATE LIGASE"/>
    <property type="match status" value="1"/>
</dbReference>
<dbReference type="Pfam" id="PF06276">
    <property type="entry name" value="FhuF"/>
    <property type="match status" value="1"/>
</dbReference>
<dbReference type="Pfam" id="PF04183">
    <property type="entry name" value="IucA_IucC"/>
    <property type="match status" value="1"/>
</dbReference>
<evidence type="ECO:0000305" key="1"/>
<keyword id="KW-0614">Plasmid</keyword>
<keyword id="KW-1185">Reference proteome</keyword>
<gene>
    <name type="primary">rhbC</name>
    <name type="synonym">rhsC</name>
    <name type="ordered locus">RA1260</name>
    <name type="ORF">SMa2404</name>
</gene>
<reference key="1">
    <citation type="journal article" date="2001" name="J. Bacteriol.">
        <title>Genetic organization of the region encoding regulation, biosynthesis, and transport of rhizobactin 1021, a siderophore produced by Sinorhizobium meliloti.</title>
        <authorList>
            <person name="Lynch D."/>
            <person name="O'Brien J."/>
            <person name="Welch T."/>
            <person name="Clarke P."/>
            <person name="Cuiv P.O."/>
            <person name="Crosa J.H."/>
            <person name="O'Connell M."/>
        </authorList>
    </citation>
    <scope>NUCLEOTIDE SEQUENCE [GENOMIC DNA]</scope>
    <source>
        <strain>RCR2011 / SU47</strain>
    </source>
</reference>
<reference key="2">
    <citation type="journal article" date="2001" name="Proc. Natl. Acad. Sci. U.S.A.">
        <title>Nucleotide sequence and predicted functions of the entire Sinorhizobium meliloti pSymA megaplasmid.</title>
        <authorList>
            <person name="Barnett M.J."/>
            <person name="Fisher R.F."/>
            <person name="Jones T."/>
            <person name="Komp C."/>
            <person name="Abola A.P."/>
            <person name="Barloy-Hubler F."/>
            <person name="Bowser L."/>
            <person name="Capela D."/>
            <person name="Galibert F."/>
            <person name="Gouzy J."/>
            <person name="Gurjal M."/>
            <person name="Hong A."/>
            <person name="Huizar L."/>
            <person name="Hyman R.W."/>
            <person name="Kahn D."/>
            <person name="Kahn M.L."/>
            <person name="Kalman S."/>
            <person name="Keating D.H."/>
            <person name="Palm C."/>
            <person name="Peck M.C."/>
            <person name="Surzycki R."/>
            <person name="Wells D.H."/>
            <person name="Yeh K.-C."/>
            <person name="Davis R.W."/>
            <person name="Federspiel N.A."/>
            <person name="Long S.R."/>
        </authorList>
    </citation>
    <scope>NUCLEOTIDE SEQUENCE [LARGE SCALE GENOMIC DNA]</scope>
    <source>
        <strain>1021</strain>
    </source>
</reference>
<reference key="3">
    <citation type="journal article" date="2001" name="Science">
        <title>The composite genome of the legume symbiont Sinorhizobium meliloti.</title>
        <authorList>
            <person name="Galibert F."/>
            <person name="Finan T.M."/>
            <person name="Long S.R."/>
            <person name="Puehler A."/>
            <person name="Abola P."/>
            <person name="Ampe F."/>
            <person name="Barloy-Hubler F."/>
            <person name="Barnett M.J."/>
            <person name="Becker A."/>
            <person name="Boistard P."/>
            <person name="Bothe G."/>
            <person name="Boutry M."/>
            <person name="Bowser L."/>
            <person name="Buhrmester J."/>
            <person name="Cadieu E."/>
            <person name="Capela D."/>
            <person name="Chain P."/>
            <person name="Cowie A."/>
            <person name="Davis R.W."/>
            <person name="Dreano S."/>
            <person name="Federspiel N.A."/>
            <person name="Fisher R.F."/>
            <person name="Gloux S."/>
            <person name="Godrie T."/>
            <person name="Goffeau A."/>
            <person name="Golding B."/>
            <person name="Gouzy J."/>
            <person name="Gurjal M."/>
            <person name="Hernandez-Lucas I."/>
            <person name="Hong A."/>
            <person name="Huizar L."/>
            <person name="Hyman R.W."/>
            <person name="Jones T."/>
            <person name="Kahn D."/>
            <person name="Kahn M.L."/>
            <person name="Kalman S."/>
            <person name="Keating D.H."/>
            <person name="Kiss E."/>
            <person name="Komp C."/>
            <person name="Lelaure V."/>
            <person name="Masuy D."/>
            <person name="Palm C."/>
            <person name="Peck M.C."/>
            <person name="Pohl T.M."/>
            <person name="Portetelle D."/>
            <person name="Purnelle B."/>
            <person name="Ramsperger U."/>
            <person name="Surzycki R."/>
            <person name="Thebault P."/>
            <person name="Vandenbol M."/>
            <person name="Vorhoelter F.J."/>
            <person name="Weidner S."/>
            <person name="Wells D.H."/>
            <person name="Wong K."/>
            <person name="Yeh K.-C."/>
            <person name="Batut J."/>
        </authorList>
    </citation>
    <scope>NUCLEOTIDE SEQUENCE [LARGE SCALE GENOMIC DNA]</scope>
    <source>
        <strain>1021</strain>
    </source>
</reference>
<proteinExistence type="inferred from homology"/>
<feature type="chain" id="PRO_0000097321" description="Rhizobactin siderophore biosynthesis protein RhbC">
    <location>
        <begin position="1"/>
        <end position="585"/>
    </location>
</feature>
<geneLocation type="plasmid">
    <name>pSymA</name>
    <name>megaplasmid 1</name>
</geneLocation>
<organism>
    <name type="scientific">Rhizobium meliloti (strain 1021)</name>
    <name type="common">Ensifer meliloti</name>
    <name type="synonym">Sinorhizobium meliloti</name>
    <dbReference type="NCBI Taxonomy" id="266834"/>
    <lineage>
        <taxon>Bacteria</taxon>
        <taxon>Pseudomonadati</taxon>
        <taxon>Pseudomonadota</taxon>
        <taxon>Alphaproteobacteria</taxon>
        <taxon>Hyphomicrobiales</taxon>
        <taxon>Rhizobiaceae</taxon>
        <taxon>Sinorhizobium/Ensifer group</taxon>
        <taxon>Sinorhizobium</taxon>
    </lineage>
</organism>